<reference key="1">
    <citation type="journal article" date="2006" name="Arch. Biochem. Biophys.">
        <title>Structure-activity relationship of an alpha-toxin Bs-Tx28 from scorpion (Buthus sindicus) venom suggests a new alpha-toxin subfamily.</title>
        <authorList>
            <person name="Ali S.A."/>
            <person name="Wang B."/>
            <person name="Alam M."/>
            <person name="Beck A."/>
            <person name="Stoeva S."/>
            <person name="Voelter W."/>
            <person name="Abbasi A."/>
            <person name="Duszenko M."/>
        </authorList>
    </citation>
    <scope>PROTEIN SEQUENCE</scope>
    <scope>FUNCTION</scope>
    <scope>SUBCELLULAR LOCATION</scope>
    <scope>TISSUE SPECIFICITY</scope>
    <scope>MASS SPECTROMETRY</scope>
    <scope>TOXIC DOSE</scope>
    <scope>AMIDATION AT ARG-65</scope>
    <source>
        <tissue>Venom</tissue>
    </source>
</reference>
<feature type="chain" id="PRO_0000066747" description="Alpha-toxin Bs-Tx28">
    <location>
        <begin position="1"/>
        <end position="65"/>
    </location>
</feature>
<feature type="domain" description="LCN-type CS-alpha/beta" evidence="1">
    <location>
        <begin position="3"/>
        <end position="65"/>
    </location>
</feature>
<feature type="modified residue" description="Arginine amide" evidence="2">
    <location>
        <position position="65"/>
    </location>
</feature>
<feature type="disulfide bond" evidence="1">
    <location>
        <begin position="13"/>
        <end position="64"/>
    </location>
</feature>
<feature type="disulfide bond" evidence="1">
    <location>
        <begin position="17"/>
        <end position="37"/>
    </location>
</feature>
<feature type="disulfide bond" evidence="1">
    <location>
        <begin position="23"/>
        <end position="47"/>
    </location>
</feature>
<feature type="disulfide bond" evidence="1">
    <location>
        <begin position="27"/>
        <end position="49"/>
    </location>
</feature>
<dbReference type="SMR" id="P84614"/>
<dbReference type="GO" id="GO:0005576">
    <property type="term" value="C:extracellular region"/>
    <property type="evidence" value="ECO:0007669"/>
    <property type="project" value="UniProtKB-SubCell"/>
</dbReference>
<dbReference type="GO" id="GO:0019871">
    <property type="term" value="F:sodium channel inhibitor activity"/>
    <property type="evidence" value="ECO:0007669"/>
    <property type="project" value="InterPro"/>
</dbReference>
<dbReference type="GO" id="GO:0090729">
    <property type="term" value="F:toxin activity"/>
    <property type="evidence" value="ECO:0007669"/>
    <property type="project" value="UniProtKB-KW"/>
</dbReference>
<dbReference type="GO" id="GO:0006952">
    <property type="term" value="P:defense response"/>
    <property type="evidence" value="ECO:0007669"/>
    <property type="project" value="InterPro"/>
</dbReference>
<dbReference type="CDD" id="cd23106">
    <property type="entry name" value="neurotoxins_LC_scorpion"/>
    <property type="match status" value="1"/>
</dbReference>
<dbReference type="FunFam" id="3.30.30.10:FF:000002">
    <property type="entry name" value="Alpha-like toxin BmK-M1"/>
    <property type="match status" value="1"/>
</dbReference>
<dbReference type="Gene3D" id="3.30.30.10">
    <property type="entry name" value="Knottin, scorpion toxin-like"/>
    <property type="match status" value="1"/>
</dbReference>
<dbReference type="InterPro" id="IPR044062">
    <property type="entry name" value="LCN-type_CS_alpha_beta_dom"/>
</dbReference>
<dbReference type="InterPro" id="IPR003614">
    <property type="entry name" value="Scorpion_toxin-like"/>
</dbReference>
<dbReference type="InterPro" id="IPR036574">
    <property type="entry name" value="Scorpion_toxin-like_sf"/>
</dbReference>
<dbReference type="InterPro" id="IPR018218">
    <property type="entry name" value="Scorpion_toxinL"/>
</dbReference>
<dbReference type="InterPro" id="IPR002061">
    <property type="entry name" value="Scorpion_toxinL/defensin"/>
</dbReference>
<dbReference type="Pfam" id="PF00537">
    <property type="entry name" value="Toxin_3"/>
    <property type="match status" value="1"/>
</dbReference>
<dbReference type="PRINTS" id="PR00285">
    <property type="entry name" value="SCORPNTOXIN"/>
</dbReference>
<dbReference type="PRINTS" id="PR00284">
    <property type="entry name" value="TOXIN"/>
</dbReference>
<dbReference type="SMART" id="SM00505">
    <property type="entry name" value="Knot1"/>
    <property type="match status" value="1"/>
</dbReference>
<dbReference type="SUPFAM" id="SSF57095">
    <property type="entry name" value="Scorpion toxin-like"/>
    <property type="match status" value="1"/>
</dbReference>
<dbReference type="PROSITE" id="PS51863">
    <property type="entry name" value="LCN_CSAB"/>
    <property type="match status" value="1"/>
</dbReference>
<organism>
    <name type="scientific">Hottentotta tamulus sindicus</name>
    <name type="common">Scorpion</name>
    <name type="synonym">Buthus sindicus</name>
    <dbReference type="NCBI Taxonomy" id="42519"/>
    <lineage>
        <taxon>Eukaryota</taxon>
        <taxon>Metazoa</taxon>
        <taxon>Ecdysozoa</taxon>
        <taxon>Arthropoda</taxon>
        <taxon>Chelicerata</taxon>
        <taxon>Arachnida</taxon>
        <taxon>Scorpiones</taxon>
        <taxon>Buthida</taxon>
        <taxon>Buthoidea</taxon>
        <taxon>Buthidae</taxon>
        <taxon>Mesobuthus</taxon>
    </lineage>
</organism>
<protein>
    <recommendedName>
        <fullName>Alpha-toxin Bs-Tx28</fullName>
    </recommendedName>
</protein>
<sequence>GVRDAYIADDKNCVYTCGSNSYCNTECTKNGAESGYCQWFGRWGNGCWCIKLPDKVPIRIPGKCR</sequence>
<name>SCX28_HOTTS</name>
<proteinExistence type="evidence at protein level"/>
<accession>P84614</accession>
<evidence type="ECO:0000255" key="1">
    <source>
        <dbReference type="PROSITE-ProRule" id="PRU01210"/>
    </source>
</evidence>
<evidence type="ECO:0000269" key="2">
    <source>
    </source>
</evidence>
<evidence type="ECO:0000305" key="3"/>
<comment type="function">
    <text evidence="2">Alpha toxins bind voltage-independently at site-3 of sodium channels (Nav) and inhibit the inactivation of the activated channels, thereby blocking neuronal transmission. This toxin inhibits the inactivation of activated TTX-sensitive sodium channels (Nav).</text>
</comment>
<comment type="subcellular location">
    <subcellularLocation>
        <location evidence="2">Secreted</location>
    </subcellularLocation>
</comment>
<comment type="tissue specificity">
    <text evidence="2">Expressed by the venom gland.</text>
</comment>
<comment type="domain">
    <text evidence="3">Has the structural arrangement of an alpha-helix connected to antiparallel beta-sheets by disulfide bonds (CS-alpha/beta).</text>
</comment>
<comment type="mass spectrometry"/>
<comment type="toxic dose">
    <text evidence="2">LD(50) is 0.088 ug/g by subcutaneous injection into mice, 0.0023 ug/g by intracerebroventricular injection into mice and 14.3 ug/g in B.germanica.</text>
</comment>
<comment type="similarity">
    <text evidence="3">Belongs to the long (4 C-C) scorpion toxin superfamily. Sodium channel inhibitor family. Alpha subfamily.</text>
</comment>
<keyword id="KW-0027">Amidation</keyword>
<keyword id="KW-0903">Direct protein sequencing</keyword>
<keyword id="KW-1015">Disulfide bond</keyword>
<keyword id="KW-0872">Ion channel impairing toxin</keyword>
<keyword id="KW-0528">Neurotoxin</keyword>
<keyword id="KW-0964">Secreted</keyword>
<keyword id="KW-0800">Toxin</keyword>
<keyword id="KW-0738">Voltage-gated sodium channel impairing toxin</keyword>